<comment type="catalytic activity">
    <reaction>
        <text>(R)-pantothenate + ATP = (R)-4'-phosphopantothenate + ADP + H(+)</text>
        <dbReference type="Rhea" id="RHEA:16373"/>
        <dbReference type="ChEBI" id="CHEBI:10986"/>
        <dbReference type="ChEBI" id="CHEBI:15378"/>
        <dbReference type="ChEBI" id="CHEBI:29032"/>
        <dbReference type="ChEBI" id="CHEBI:30616"/>
        <dbReference type="ChEBI" id="CHEBI:456216"/>
        <dbReference type="EC" id="2.7.1.33"/>
    </reaction>
</comment>
<comment type="pathway">
    <text>Cofactor biosynthesis; coenzyme A biosynthesis; CoA from (R)-pantothenate: step 1/5.</text>
</comment>
<comment type="subcellular location">
    <subcellularLocation>
        <location evidence="1">Cytoplasm</location>
    </subcellularLocation>
</comment>
<comment type="similarity">
    <text evidence="3">Belongs to the prokaryotic pantothenate kinase family.</text>
</comment>
<comment type="sequence caution" evidence="3">
    <conflict type="erroneous initiation">
        <sequence resource="EMBL-CDS" id="AAF93493"/>
    </conflict>
</comment>
<reference key="1">
    <citation type="journal article" date="2000" name="Nature">
        <title>DNA sequence of both chromosomes of the cholera pathogen Vibrio cholerae.</title>
        <authorList>
            <person name="Heidelberg J.F."/>
            <person name="Eisen J.A."/>
            <person name="Nelson W.C."/>
            <person name="Clayton R.A."/>
            <person name="Gwinn M.L."/>
            <person name="Dodson R.J."/>
            <person name="Haft D.H."/>
            <person name="Hickey E.K."/>
            <person name="Peterson J.D."/>
            <person name="Umayam L.A."/>
            <person name="Gill S.R."/>
            <person name="Nelson K.E."/>
            <person name="Read T.D."/>
            <person name="Tettelin H."/>
            <person name="Richardson D.L."/>
            <person name="Ermolaeva M.D."/>
            <person name="Vamathevan J.J."/>
            <person name="Bass S."/>
            <person name="Qin H."/>
            <person name="Dragoi I."/>
            <person name="Sellers P."/>
            <person name="McDonald L.A."/>
            <person name="Utterback T.R."/>
            <person name="Fleischmann R.D."/>
            <person name="Nierman W.C."/>
            <person name="White O."/>
            <person name="Salzberg S.L."/>
            <person name="Smith H.O."/>
            <person name="Colwell R.R."/>
            <person name="Mekalanos J.J."/>
            <person name="Venter J.C."/>
            <person name="Fraser C.M."/>
        </authorList>
    </citation>
    <scope>NUCLEOTIDE SEQUENCE [LARGE SCALE GENOMIC DNA]</scope>
    <source>
        <strain>ATCC 39315 / El Tor Inaba N16961</strain>
    </source>
</reference>
<protein>
    <recommendedName>
        <fullName>Pantothenate kinase</fullName>
        <ecNumber>2.7.1.33</ecNumber>
    </recommendedName>
    <alternativeName>
        <fullName>Pantothenic acid kinase</fullName>
    </alternativeName>
</protein>
<gene>
    <name type="primary">coaA</name>
    <name type="ordered locus">VC_0320</name>
</gene>
<evidence type="ECO:0000250" key="1"/>
<evidence type="ECO:0000255" key="2"/>
<evidence type="ECO:0000305" key="3"/>
<feature type="chain" id="PRO_0000194460" description="Pantothenate kinase">
    <location>
        <begin position="1"/>
        <end position="312"/>
    </location>
</feature>
<feature type="binding site" evidence="2">
    <location>
        <begin position="92"/>
        <end position="99"/>
    </location>
    <ligand>
        <name>ATP</name>
        <dbReference type="ChEBI" id="CHEBI:30616"/>
    </ligand>
</feature>
<sequence>MIEPIMSPYLTFDRQHWAQLRNSVPMTLSESDLKELQGINDHLSMTEAVEIYLPLARLLNLYVAARQSRNGVLHQFLGNTESAPPFVIGIAGSVAVGKSTTARLLKALLSRWENHPKVELITTDGFLYPNKVLTERGIMHKKGFPESYDIRRLVEFVSEVKAGQPNVTAPVYSHLTYDITDEMKVVDRPDVLIIEGLNVLQSGMDYPHDPHRVFISDFLDFSIYVDADSQLIEKWYIERFMKFRQGAFKKPGSYFSHYTALTEAQAEQKARSIWETINGKNLVENILPTKGRAHLILRKGLNHTVEEVLLRK</sequence>
<keyword id="KW-0067">ATP-binding</keyword>
<keyword id="KW-0173">Coenzyme A biosynthesis</keyword>
<keyword id="KW-0963">Cytoplasm</keyword>
<keyword id="KW-0418">Kinase</keyword>
<keyword id="KW-0547">Nucleotide-binding</keyword>
<keyword id="KW-1185">Reference proteome</keyword>
<keyword id="KW-0808">Transferase</keyword>
<dbReference type="EC" id="2.7.1.33"/>
<dbReference type="EMBL" id="AE003852">
    <property type="protein sequence ID" value="AAF93493.1"/>
    <property type="status" value="ALT_INIT"/>
    <property type="molecule type" value="Genomic_DNA"/>
</dbReference>
<dbReference type="PIR" id="F82337">
    <property type="entry name" value="F82337"/>
</dbReference>
<dbReference type="RefSeq" id="NP_229974.1">
    <property type="nucleotide sequence ID" value="NC_002505.1"/>
</dbReference>
<dbReference type="SMR" id="Q9KV38"/>
<dbReference type="STRING" id="243277.VC_0320"/>
<dbReference type="DNASU" id="2615111"/>
<dbReference type="EnsemblBacteria" id="AAF93493">
    <property type="protein sequence ID" value="AAF93493"/>
    <property type="gene ID" value="VC_0320"/>
</dbReference>
<dbReference type="KEGG" id="vch:VC_0320"/>
<dbReference type="PATRIC" id="fig|243277.26.peg.297"/>
<dbReference type="eggNOG" id="COG1072">
    <property type="taxonomic scope" value="Bacteria"/>
</dbReference>
<dbReference type="HOGENOM" id="CLU_053818_1_1_6"/>
<dbReference type="UniPathway" id="UPA00241">
    <property type="reaction ID" value="UER00352"/>
</dbReference>
<dbReference type="Proteomes" id="UP000000584">
    <property type="component" value="Chromosome 1"/>
</dbReference>
<dbReference type="GO" id="GO:0005737">
    <property type="term" value="C:cytoplasm"/>
    <property type="evidence" value="ECO:0000318"/>
    <property type="project" value="GO_Central"/>
</dbReference>
<dbReference type="GO" id="GO:0005524">
    <property type="term" value="F:ATP binding"/>
    <property type="evidence" value="ECO:0007669"/>
    <property type="project" value="UniProtKB-UniRule"/>
</dbReference>
<dbReference type="GO" id="GO:0004594">
    <property type="term" value="F:pantothenate kinase activity"/>
    <property type="evidence" value="ECO:0000318"/>
    <property type="project" value="GO_Central"/>
</dbReference>
<dbReference type="GO" id="GO:0015937">
    <property type="term" value="P:coenzyme A biosynthetic process"/>
    <property type="evidence" value="ECO:0000318"/>
    <property type="project" value="GO_Central"/>
</dbReference>
<dbReference type="CDD" id="cd02025">
    <property type="entry name" value="PanK"/>
    <property type="match status" value="1"/>
</dbReference>
<dbReference type="FunFam" id="3.40.50.300:FF:000242">
    <property type="entry name" value="Pantothenate kinase"/>
    <property type="match status" value="1"/>
</dbReference>
<dbReference type="Gene3D" id="3.40.50.300">
    <property type="entry name" value="P-loop containing nucleotide triphosphate hydrolases"/>
    <property type="match status" value="1"/>
</dbReference>
<dbReference type="HAMAP" id="MF_00215">
    <property type="entry name" value="Pantothen_kinase_1"/>
    <property type="match status" value="1"/>
</dbReference>
<dbReference type="InterPro" id="IPR027417">
    <property type="entry name" value="P-loop_NTPase"/>
</dbReference>
<dbReference type="InterPro" id="IPR004566">
    <property type="entry name" value="PanK"/>
</dbReference>
<dbReference type="InterPro" id="IPR006083">
    <property type="entry name" value="PRK/URK"/>
</dbReference>
<dbReference type="NCBIfam" id="TIGR00554">
    <property type="entry name" value="panK_bact"/>
    <property type="match status" value="1"/>
</dbReference>
<dbReference type="PANTHER" id="PTHR10285">
    <property type="entry name" value="URIDINE KINASE"/>
    <property type="match status" value="1"/>
</dbReference>
<dbReference type="Pfam" id="PF00485">
    <property type="entry name" value="PRK"/>
    <property type="match status" value="1"/>
</dbReference>
<dbReference type="PIRSF" id="PIRSF000545">
    <property type="entry name" value="Pantothenate_kin"/>
    <property type="match status" value="1"/>
</dbReference>
<dbReference type="SUPFAM" id="SSF52540">
    <property type="entry name" value="P-loop containing nucleoside triphosphate hydrolases"/>
    <property type="match status" value="1"/>
</dbReference>
<proteinExistence type="inferred from homology"/>
<name>COAA_VIBCH</name>
<organism>
    <name type="scientific">Vibrio cholerae serotype O1 (strain ATCC 39315 / El Tor Inaba N16961)</name>
    <dbReference type="NCBI Taxonomy" id="243277"/>
    <lineage>
        <taxon>Bacteria</taxon>
        <taxon>Pseudomonadati</taxon>
        <taxon>Pseudomonadota</taxon>
        <taxon>Gammaproteobacteria</taxon>
        <taxon>Vibrionales</taxon>
        <taxon>Vibrionaceae</taxon>
        <taxon>Vibrio</taxon>
    </lineage>
</organism>
<accession>Q9KV38</accession>